<proteinExistence type="evidence at protein level"/>
<accession>Q96EX3</accession>
<accession>Q5VXV4</accession>
<accession>Q9BV46</accession>
<reference key="1">
    <citation type="journal article" date="2004" name="Nature">
        <title>DNA sequence and analysis of human chromosome 9.</title>
        <authorList>
            <person name="Humphray S.J."/>
            <person name="Oliver K."/>
            <person name="Hunt A.R."/>
            <person name="Plumb R.W."/>
            <person name="Loveland J.E."/>
            <person name="Howe K.L."/>
            <person name="Andrews T.D."/>
            <person name="Searle S."/>
            <person name="Hunt S.E."/>
            <person name="Scott C.E."/>
            <person name="Jones M.C."/>
            <person name="Ainscough R."/>
            <person name="Almeida J.P."/>
            <person name="Ambrose K.D."/>
            <person name="Ashwell R.I.S."/>
            <person name="Babbage A.K."/>
            <person name="Babbage S."/>
            <person name="Bagguley C.L."/>
            <person name="Bailey J."/>
            <person name="Banerjee R."/>
            <person name="Barker D.J."/>
            <person name="Barlow K.F."/>
            <person name="Bates K."/>
            <person name="Beasley H."/>
            <person name="Beasley O."/>
            <person name="Bird C.P."/>
            <person name="Bray-Allen S."/>
            <person name="Brown A.J."/>
            <person name="Brown J.Y."/>
            <person name="Burford D."/>
            <person name="Burrill W."/>
            <person name="Burton J."/>
            <person name="Carder C."/>
            <person name="Carter N.P."/>
            <person name="Chapman J.C."/>
            <person name="Chen Y."/>
            <person name="Clarke G."/>
            <person name="Clark S.Y."/>
            <person name="Clee C.M."/>
            <person name="Clegg S."/>
            <person name="Collier R.E."/>
            <person name="Corby N."/>
            <person name="Crosier M."/>
            <person name="Cummings A.T."/>
            <person name="Davies J."/>
            <person name="Dhami P."/>
            <person name="Dunn M."/>
            <person name="Dutta I."/>
            <person name="Dyer L.W."/>
            <person name="Earthrowl M.E."/>
            <person name="Faulkner L."/>
            <person name="Fleming C.J."/>
            <person name="Frankish A."/>
            <person name="Frankland J.A."/>
            <person name="French L."/>
            <person name="Fricker D.G."/>
            <person name="Garner P."/>
            <person name="Garnett J."/>
            <person name="Ghori J."/>
            <person name="Gilbert J.G.R."/>
            <person name="Glison C."/>
            <person name="Grafham D.V."/>
            <person name="Gribble S."/>
            <person name="Griffiths C."/>
            <person name="Griffiths-Jones S."/>
            <person name="Grocock R."/>
            <person name="Guy J."/>
            <person name="Hall R.E."/>
            <person name="Hammond S."/>
            <person name="Harley J.L."/>
            <person name="Harrison E.S.I."/>
            <person name="Hart E.A."/>
            <person name="Heath P.D."/>
            <person name="Henderson C.D."/>
            <person name="Hopkins B.L."/>
            <person name="Howard P.J."/>
            <person name="Howden P.J."/>
            <person name="Huckle E."/>
            <person name="Johnson C."/>
            <person name="Johnson D."/>
            <person name="Joy A.A."/>
            <person name="Kay M."/>
            <person name="Keenan S."/>
            <person name="Kershaw J.K."/>
            <person name="Kimberley A.M."/>
            <person name="King A."/>
            <person name="Knights A."/>
            <person name="Laird G.K."/>
            <person name="Langford C."/>
            <person name="Lawlor S."/>
            <person name="Leongamornlert D.A."/>
            <person name="Leversha M."/>
            <person name="Lloyd C."/>
            <person name="Lloyd D.M."/>
            <person name="Lovell J."/>
            <person name="Martin S."/>
            <person name="Mashreghi-Mohammadi M."/>
            <person name="Matthews L."/>
            <person name="McLaren S."/>
            <person name="McLay K.E."/>
            <person name="McMurray A."/>
            <person name="Milne S."/>
            <person name="Nickerson T."/>
            <person name="Nisbett J."/>
            <person name="Nordsiek G."/>
            <person name="Pearce A.V."/>
            <person name="Peck A.I."/>
            <person name="Porter K.M."/>
            <person name="Pandian R."/>
            <person name="Pelan S."/>
            <person name="Phillimore B."/>
            <person name="Povey S."/>
            <person name="Ramsey Y."/>
            <person name="Rand V."/>
            <person name="Scharfe M."/>
            <person name="Sehra H.K."/>
            <person name="Shownkeen R."/>
            <person name="Sims S.K."/>
            <person name="Skuce C.D."/>
            <person name="Smith M."/>
            <person name="Steward C.A."/>
            <person name="Swarbreck D."/>
            <person name="Sycamore N."/>
            <person name="Tester J."/>
            <person name="Thorpe A."/>
            <person name="Tracey A."/>
            <person name="Tromans A."/>
            <person name="Thomas D.W."/>
            <person name="Wall M."/>
            <person name="Wallis J.M."/>
            <person name="West A.P."/>
            <person name="Whitehead S.L."/>
            <person name="Willey D.L."/>
            <person name="Williams S.A."/>
            <person name="Wilming L."/>
            <person name="Wray P.W."/>
            <person name="Young L."/>
            <person name="Ashurst J.L."/>
            <person name="Coulson A."/>
            <person name="Blocker H."/>
            <person name="Durbin R.M."/>
            <person name="Sulston J.E."/>
            <person name="Hubbard T."/>
            <person name="Jackson M.J."/>
            <person name="Bentley D.R."/>
            <person name="Beck S."/>
            <person name="Rogers J."/>
            <person name="Dunham I."/>
        </authorList>
    </citation>
    <scope>NUCLEOTIDE SEQUENCE [LARGE SCALE GENOMIC DNA]</scope>
</reference>
<reference key="2">
    <citation type="journal article" date="2004" name="Genome Res.">
        <title>The status, quality, and expansion of the NIH full-length cDNA project: the Mammalian Gene Collection (MGC).</title>
        <authorList>
            <consortium name="The MGC Project Team"/>
        </authorList>
    </citation>
    <scope>NUCLEOTIDE SEQUENCE [LARGE SCALE MRNA]</scope>
    <source>
        <tissue>Brain</tissue>
        <tissue>Lung</tissue>
    </source>
</reference>
<reference key="3">
    <citation type="journal article" date="2009" name="Cell. Mol. Life Sci.">
        <title>WDR34 is a novel TAK1-associated suppressor of the IL-1R/TLR3/TLR4-induced NF-kappaB activation pathway.</title>
        <authorList>
            <person name="Gao D."/>
            <person name="Wang R."/>
            <person name="Li B."/>
            <person name="Yang Y."/>
            <person name="Zhai Z."/>
            <person name="Chen D.Y."/>
        </authorList>
    </citation>
    <scope>FUNCTION</scope>
    <scope>INTERACTION WITH MAP3K7; TAB2; TAB3 AND TRAF6</scope>
    <scope>SUBCELLULAR LOCATION</scope>
    <scope>TISSUE SPECIFICITY</scope>
</reference>
<reference key="4">
    <citation type="journal article" date="2013" name="Am. J. Hum. Genet.">
        <title>WDR34 mutations that cause short-rib polydactyly syndrome type III/severe asphyxiating thoracic dysplasia reveal a role for the NF-kappaB pathway in cilia.</title>
        <authorList>
            <person name="Huber C."/>
            <person name="Wu S."/>
            <person name="Kim A.S."/>
            <person name="Sigaudy S."/>
            <person name="Sarukhanov A."/>
            <person name="Serre V."/>
            <person name="Baujat G."/>
            <person name="Le Quan Sang K.H."/>
            <person name="Rimoin D.L."/>
            <person name="Cohn D.H."/>
            <person name="Munnich A."/>
            <person name="Krakow D."/>
            <person name="Cormier-Daire V."/>
        </authorList>
    </citation>
    <scope>FUNCTION</scope>
    <scope>VARIANTS SRTD11 VAL-341; MET-354; GLN-447 AND TRP-447</scope>
</reference>
<reference key="5">
    <citation type="journal article" date="2013" name="Am. J. Hum. Genet.">
        <title>Mutations in the gene encoding IFT dynein complex component WDR34 cause Jeune asphyxiating thoracic dystrophy.</title>
        <authorList>
            <person name="Schmidts M."/>
            <person name="Vodopiutz J."/>
            <person name="Christou-Savina S."/>
            <person name="Cortes C.R."/>
            <person name="McInerney-Leo A.M."/>
            <person name="Emes R.D."/>
            <person name="Arts H.H."/>
            <person name="Tuysuz B."/>
            <person name="D'Silva J."/>
            <person name="Leo P.J."/>
            <person name="Giles T.C."/>
            <person name="Oud M.M."/>
            <person name="Harris J.A."/>
            <person name="Koopmans M."/>
            <person name="Marshall M."/>
            <person name="Elcioglu N."/>
            <person name="Kuechler A."/>
            <person name="Bockenhauer D."/>
            <person name="Moore A.T."/>
            <person name="Wilson L.C."/>
            <person name="Janecke A.R."/>
            <person name="Hurles M.E."/>
            <person name="Emmet W."/>
            <person name="Gardiner B."/>
            <person name="Streubel B."/>
            <person name="Dopita B."/>
            <person name="Zankl A."/>
            <person name="Kayserili H."/>
            <person name="Scambler P.J."/>
            <person name="Brown M.A."/>
            <person name="Beales P.L."/>
            <person name="Wicking C."/>
            <person name="Duncan E.L."/>
            <person name="Mitchison H.M."/>
        </authorList>
    </citation>
    <scope>VARIANTS SRTD11 PHE-148; LEU-390; SER-393; ILE-410; ARG-436 AND TRP-447</scope>
    <scope>VARIANTS VAL-22 AND CYS-206</scope>
</reference>
<reference key="6">
    <citation type="journal article" date="2014" name="J. Cell Sci.">
        <title>Subunit composition of the human cytoplasmic dynein-2 complex.</title>
        <authorList>
            <person name="Asante D."/>
            <person name="Stevenson N.L."/>
            <person name="Stephens D.J."/>
        </authorList>
    </citation>
    <scope>IDENTIFICATION IN THE CYTOPLASMIC DYNEIN 2 COMPLEX</scope>
    <scope>SUBCELLULAR LOCATION</scope>
    <scope>FUNCTION</scope>
</reference>
<reference key="7">
    <citation type="journal article" date="2017" name="Taiwan. J. Obstet. Gynecol.">
        <title>Identification of a c.544C&gt;T mutation in WDR34 as a deleterious recessive allele of short rib-polydactyly syndrome.</title>
        <authorList>
            <person name="You S.H."/>
            <person name="Lee Y.S."/>
            <person name="Lee C.P."/>
            <person name="Lin C.P."/>
            <person name="Lin C.Y."/>
            <person name="Tsai C.L."/>
            <person name="Chang Y.L."/>
            <person name="Cheng P.J."/>
            <person name="Wang T.H."/>
            <person name="Chang S.D."/>
        </authorList>
    </citation>
    <scope>VARIANT SRTD11 TRP-182</scope>
</reference>
<reference key="8">
    <citation type="journal article" date="2018" name="Mol. Biol. Cell">
        <title>Interaction of WDR60 intermediate chain with TCTEX1D2 light chain of the dynein-2 complex is crucial for ciliary protein trafficking.</title>
        <authorList>
            <person name="Hamada Y."/>
            <person name="Tsurumi Y."/>
            <person name="Nozaki S."/>
            <person name="Katoh Y."/>
            <person name="Nakayama K."/>
        </authorList>
    </citation>
    <scope>INTERACTION WITH DYNC2I1</scope>
    <scope>FUNCTION</scope>
</reference>
<reference key="9">
    <citation type="journal article" date="2018" name="Elife">
        <title>Dynein-2 intermediate chains play crucial but distinct roles in primary cilia formation and function.</title>
        <authorList>
            <person name="Vuolo L."/>
            <person name="Stevenson N.L."/>
            <person name="Heesom K.J."/>
            <person name="Stephens D.J."/>
        </authorList>
    </citation>
    <scope>FUNCTION</scope>
</reference>
<reference key="10">
    <citation type="journal article" date="2019" name="Mol. Biol. Cell">
        <title>Interactions of the dynein-2 intermediate chain WDR34 with the light chains are required for ciliary retrograde protein trafficking.</title>
        <authorList>
            <person name="Tsurumi Y."/>
            <person name="Hamada Y."/>
            <person name="Katoh Y."/>
            <person name="Nakayama K."/>
        </authorList>
    </citation>
    <scope>SUBUNIT</scope>
    <scope>FUNCTION</scope>
    <scope>INTERACTION WITH DYNLL2 AND DYNLRB1</scope>
</reference>
<reference evidence="14 15" key="11">
    <citation type="journal article" date="2019" name="Nat. Struct. Mol. Biol.">
        <title>Structure of the dynein-2 complex and its assembly with intraflagellar transport trains.</title>
        <authorList>
            <person name="Toropova K."/>
            <person name="Zalyte R."/>
            <person name="Mukhopadhyay A.G."/>
            <person name="Mladenov M."/>
            <person name="Carter A.P."/>
            <person name="Roberts A.J."/>
        </authorList>
    </citation>
    <scope>STRUCTURE BY ELECTRON MICROSCOPY (3.90 ANGSTROMS) OF THE DYNEIN-2 COMPLEX</scope>
</reference>
<keyword id="KW-0002">3D-structure</keyword>
<keyword id="KW-0966">Cell projection</keyword>
<keyword id="KW-1186">Ciliopathy</keyword>
<keyword id="KW-0963">Cytoplasm</keyword>
<keyword id="KW-0206">Cytoskeleton</keyword>
<keyword id="KW-0225">Disease variant</keyword>
<keyword id="KW-0597">Phosphoprotein</keyword>
<keyword id="KW-1267">Proteomics identification</keyword>
<keyword id="KW-1185">Reference proteome</keyword>
<keyword id="KW-0677">Repeat</keyword>
<keyword id="KW-0853">WD repeat</keyword>
<name>DC2I2_HUMAN</name>
<gene>
    <name evidence="13" type="primary">DYNC2I2</name>
    <name type="synonym">WDR34</name>
</gene>
<comment type="function">
    <text evidence="6 8 9 10">Acts as one of several non-catalytic accessory components of the cytoplasmic dynein 2 complex (dynein-2 complex), a motor protein complex that drives the movement of cargos along microtubules within cilia and flagella in concert with the intraflagellar transport (IFT) system (PubMed:25205765, PubMed:29742051). DYNC2I2 plays a major role in retrograde ciliary protein trafficking and in ciliogenesis (PubMed:29742051, PubMed:30320547, PubMed:30649997). Required also to maintain a functional transition zone (PubMed:30320547).</text>
</comment>
<comment type="function">
    <text evidence="3 4">Acts as a negative regulator of the Toll-like and IL-1R receptor signaling pathways. Inhibits the MAP3K7-induced NF-kappa-B activation pathway. Inhibits MAP3K7 phosphorylation at 'Thr-184' and 'Thr-187' upon Il-1 beta stimulation.</text>
</comment>
<comment type="subunit">
    <text evidence="3 6 8 10 11">The cytoplasmic dynein 2 complex consists of two catalytic heavy chains (HCs) and a number of non-catalytic subunits presented by intermediate chains (ICs), light intermediate chains (LICs) and light chains (LCs). Among them, a heavy chain (DYNC2H1), two intermediate chains (DYNC2I2 and DYNC2I1), a light intermediate chain (DYNC2LI1), and a light chain (DYNLT2B) are unique to the cytoplasmic dynein complex 2, but a subset of the light chains are also shared by dynein-1 and dynein-2 complexes (PubMed:25205765, PubMed:31451806). Interacts with DYNC2I1; their C-terminal domains each bind a copy of the heavy chain, and their extended N-terminal regions are held together by an array of light chain dimers (PubMed:29742051, PubMed:31451806). Interacts with DYNLL2; this interaction is essential for dynein-2-mediated retrograde trafficking of ciliary proteins (PubMed:30649997). Interacts with DYNLRB1; this interaction is essential for dynein-2-mediated retrograde trafficking of ciliary proteins (PubMed:30649997). Interacts (via the WD domains) with MAP3K7 and TAB3. Interacts (via WD domains) with TAB2 (via C-terminus). Interacts (via WD domains) with TRAF6 (via TRAF-type domains) (PubMed:19521662).</text>
</comment>
<comment type="interaction">
    <interactant intactId="EBI-2556091">
        <id>Q96EX3</id>
    </interactant>
    <interactant intactId="EBI-945751">
        <id>P38432</id>
        <label>COIL</label>
    </interactant>
    <organismsDiffer>false</organismsDiffer>
    <experiments>3</experiments>
</comment>
<comment type="interaction">
    <interactant intactId="EBI-2556091">
        <id>Q96EX3</id>
    </interactant>
    <interactant intactId="EBI-2556085">
        <id>Q8WVS4</id>
        <label>DYNC2I1</label>
    </interactant>
    <organismsDiffer>false</organismsDiffer>
    <experiments>6</experiments>
</comment>
<comment type="interaction">
    <interactant intactId="EBI-2556091">
        <id>Q96EX3</id>
    </interactant>
    <interactant intactId="EBI-16439278">
        <id>Q6FHY5</id>
        <label>MEOX2</label>
    </interactant>
    <organismsDiffer>false</organismsDiffer>
    <experiments>3</experiments>
</comment>
<comment type="interaction">
    <interactant intactId="EBI-2556091">
        <id>Q96EX3</id>
    </interactant>
    <interactant intactId="EBI-2130429">
        <id>Q9BYV2</id>
        <label>TRIM54</label>
    </interactant>
    <organismsDiffer>false</organismsDiffer>
    <experiments>3</experiments>
</comment>
<comment type="subcellular location">
    <subcellularLocation>
        <location evidence="3 6">Cytoplasm</location>
    </subcellularLocation>
    <subcellularLocation>
        <location evidence="3 6">Cytoplasm</location>
        <location evidence="3 6">Cytoskeleton</location>
        <location evidence="3 6">Cilium basal body</location>
    </subcellularLocation>
    <subcellularLocation>
        <location evidence="3">Cytoplasm</location>
        <location evidence="3">Cytoskeleton</location>
        <location evidence="3">Cilium axoneme</location>
    </subcellularLocation>
    <subcellularLocation>
        <location evidence="6">Cytoplasm</location>
        <location evidence="6">Cytoskeleton</location>
        <location evidence="6">Microtubule organizing center</location>
        <location evidence="6">Centrosome</location>
    </subcellularLocation>
    <subcellularLocation>
        <location evidence="6">Cell projection</location>
        <location evidence="6">Cilium</location>
    </subcellularLocation>
    <subcellularLocation>
        <location evidence="1">Cell projection</location>
        <location evidence="1">Filopodium</location>
    </subcellularLocation>
    <text evidence="1">Concentrates around the centrioles and basal bodies also showing axonemal staining.</text>
</comment>
<comment type="tissue specificity">
    <text evidence="3">Expressed in several cell lines (at protein level).</text>
</comment>
<comment type="disease" evidence="4 5 7">
    <disease id="DI-04036">
        <name>Short-rib thoracic dysplasia 11 with or without polydactyly</name>
        <acronym>SRTD11</acronym>
        <description>A form of short-rib thoracic dysplasia, a group of autosomal recessive ciliopathies that are characterized by a constricted thoracic cage, short ribs, shortened tubular bones, and a 'trident' appearance of the acetabular roof. Polydactyly is variably present. Non-skeletal involvement can include cleft lip/palate as well as anomalies of major organs such as the brain, eye, heart, kidneys, liver, pancreas, intestines, and genitalia. Some forms of the disease are lethal in the neonatal period due to respiratory insufficiency secondary to a severely restricted thoracic cage, whereas others are compatible with life. Disease spectrum encompasses Ellis-van Creveld syndrome, asphyxiating thoracic dystrophy (Jeune syndrome), Mainzer-Saldino syndrome, and short rib-polydactyly syndrome.</description>
        <dbReference type="MIM" id="615633"/>
    </disease>
    <text>The disease is caused by variants affecting the gene represented in this entry.</text>
</comment>
<comment type="similarity">
    <text evidence="12">Belongs to the dynein light intermediate chain family.</text>
</comment>
<sequence>MATRAQPGPLSQAGSAGVAALATVGVASGPGPGRPGPLQDETLGVASVPSQWRAVQGIRWETKSCQTASIATASASAQARNHVDAQVQTEAPVPVSVQPPSQYDIPRLAAFLRRVEAMVIRELNKNWQSHAFDGFEVNWTEQQQMVSCLYTLGYPPAQAQGLHVTSISWNSTGSVVACAYGRLDHGDWSTLKSFVCAWNLDRRDLRPQQPSAVVEVPSAVLCLAFHPTQPSHVAGGLYSGEVLVWDLSRLEDPLLWRTGLTDDTHTDPVSQVVWLPEPGHSHRFQVLSVATDGKVLLWQGIGVGQLQLTEGFALVMQQLPRSTKLKKHPRGETEVGATAVAFSSFDPRLFILGTEGGFPLKCSLAAGEAALTRMPSSVPLRAPAQFTFSPHGGPIYSVSCSPFHRNLFLSAGTDGHVHLYSMLQAPPLTSLQLSLKYLFAVRWSPVRPLVFAAASGKGDVQLFDLQKSSQKPTVLIKQTQDESPVYCLEFNSQQTQLLAAGDAQGTVKVWQLSTEFTEQGPREAEDLDCLAAEVAA</sequence>
<evidence type="ECO:0000250" key="1">
    <source>
        <dbReference type="UniProtKB" id="Q5U4F6"/>
    </source>
</evidence>
<evidence type="ECO:0000255" key="2"/>
<evidence type="ECO:0000269" key="3">
    <source>
    </source>
</evidence>
<evidence type="ECO:0000269" key="4">
    <source>
    </source>
</evidence>
<evidence type="ECO:0000269" key="5">
    <source>
    </source>
</evidence>
<evidence type="ECO:0000269" key="6">
    <source>
    </source>
</evidence>
<evidence type="ECO:0000269" key="7">
    <source>
    </source>
</evidence>
<evidence type="ECO:0000269" key="8">
    <source>
    </source>
</evidence>
<evidence type="ECO:0000269" key="9">
    <source>
    </source>
</evidence>
<evidence type="ECO:0000269" key="10">
    <source>
    </source>
</evidence>
<evidence type="ECO:0000269" key="11">
    <source>
    </source>
</evidence>
<evidence type="ECO:0000305" key="12"/>
<evidence type="ECO:0000312" key="13">
    <source>
        <dbReference type="HGNC" id="HGNC:28296"/>
    </source>
</evidence>
<evidence type="ECO:0007744" key="14">
    <source>
        <dbReference type="PDB" id="6RLB"/>
    </source>
</evidence>
<evidence type="ECO:0007744" key="15">
    <source>
        <dbReference type="PDB" id="6SC2"/>
    </source>
</evidence>
<feature type="chain" id="PRO_0000051383" description="Cytoplasmic dynein 2 intermediate chain 2">
    <location>
        <begin position="1"/>
        <end position="536"/>
    </location>
</feature>
<feature type="repeat" description="WD 1" evidence="2">
    <location>
        <begin position="215"/>
        <end position="255"/>
    </location>
</feature>
<feature type="repeat" description="WD 2" evidence="2">
    <location>
        <begin position="264"/>
        <end position="308"/>
    </location>
</feature>
<feature type="repeat" description="WD 3" evidence="2">
    <location>
        <begin position="390"/>
        <end position="430"/>
    </location>
</feature>
<feature type="repeat" description="WD 4" evidence="2">
    <location>
        <begin position="433"/>
        <end position="473"/>
    </location>
</feature>
<feature type="repeat" description="WD 5" evidence="2">
    <location>
        <begin position="480"/>
        <end position="520"/>
    </location>
</feature>
<feature type="region of interest" description="DYNLL2 binding" evidence="10">
    <location>
        <begin position="80"/>
        <end position="93"/>
    </location>
</feature>
<feature type="region of interest" description="DYNLRB1 binding" evidence="10">
    <location>
        <begin position="106"/>
        <end position="131"/>
    </location>
</feature>
<feature type="modified residue" description="Phosphoserine" evidence="1">
    <location>
        <position position="15"/>
    </location>
</feature>
<feature type="sequence variant" id="VAR_070962" description="In dbSNP:rs201715229." evidence="5">
    <original>A</original>
    <variation>V</variation>
    <location>
        <position position="22"/>
    </location>
</feature>
<feature type="sequence variant" id="VAR_070963" description="In SRTD11; dbSNP:rs1860428253." evidence="5">
    <original>C</original>
    <variation>F</variation>
    <location>
        <position position="148"/>
    </location>
</feature>
<feature type="sequence variant" id="VAR_083840" description="In SRTD11; dbSNP:rs555811074." evidence="7">
    <original>R</original>
    <variation>W</variation>
    <location>
        <position position="182"/>
    </location>
</feature>
<feature type="sequence variant" id="VAR_070964" description="In dbSNP:rs148543026." evidence="5">
    <original>R</original>
    <variation>C</variation>
    <location>
        <position position="206"/>
    </location>
</feature>
<feature type="sequence variant" id="VAR_070965" description="In SRTD11; dbSNP:rs587777091." evidence="4">
    <original>A</original>
    <variation>V</variation>
    <location>
        <position position="341"/>
    </location>
</feature>
<feature type="sequence variant" id="VAR_070966" description="In SRTD11; dbSNP:rs587777092." evidence="4">
    <original>T</original>
    <variation>M</variation>
    <location>
        <position position="354"/>
    </location>
</feature>
<feature type="sequence variant" id="VAR_070967" description="In SRTD11; dbSNP:rs999307682." evidence="5">
    <original>P</original>
    <variation>L</variation>
    <location>
        <position position="390"/>
    </location>
</feature>
<feature type="sequence variant" id="VAR_070968" description="In SRTD11; dbSNP:rs587777096." evidence="5">
    <original>G</original>
    <variation>S</variation>
    <location>
        <position position="393"/>
    </location>
</feature>
<feature type="sequence variant" id="VAR_070969" description="In SRTD11." evidence="5">
    <original>S</original>
    <variation>I</variation>
    <location>
        <position position="410"/>
    </location>
</feature>
<feature type="sequence variant" id="VAR_070970" description="In SRTD11; dbSNP:rs587777098." evidence="5">
    <original>K</original>
    <variation>R</variation>
    <location>
        <position position="436"/>
    </location>
</feature>
<feature type="sequence variant" id="VAR_070971" description="In SRTD11; dbSNP:rs587777094." evidence="4">
    <original>R</original>
    <variation>Q</variation>
    <location>
        <position position="447"/>
    </location>
</feature>
<feature type="sequence variant" id="VAR_070972" description="In SRTD11; dbSNP:rs587777093." evidence="4 5">
    <original>R</original>
    <variation>W</variation>
    <location>
        <position position="447"/>
    </location>
</feature>
<feature type="sequence conflict" description="In Ref. 2; AAH11874/AAH01614." evidence="12" ref="2">
    <original>W</original>
    <variation>G</variation>
    <location>
        <position position="60"/>
    </location>
</feature>
<feature type="sequence conflict" description="In Ref. 2; AAH01614." evidence="12" ref="2">
    <original>G</original>
    <variation>S</variation>
    <location>
        <position position="356"/>
    </location>
</feature>
<dbReference type="EMBL" id="AL356481">
    <property type="status" value="NOT_ANNOTATED_CDS"/>
    <property type="molecule type" value="Genomic_DNA"/>
</dbReference>
<dbReference type="EMBL" id="BC001614">
    <property type="protein sequence ID" value="AAH01614.3"/>
    <property type="molecule type" value="mRNA"/>
</dbReference>
<dbReference type="EMBL" id="BC011874">
    <property type="protein sequence ID" value="AAH11874.2"/>
    <property type="molecule type" value="mRNA"/>
</dbReference>
<dbReference type="CCDS" id="CCDS6906.2"/>
<dbReference type="RefSeq" id="NP_443076.2">
    <property type="nucleotide sequence ID" value="NM_052844.4"/>
</dbReference>
<dbReference type="RefSeq" id="XP_047280013.1">
    <property type="nucleotide sequence ID" value="XM_047424057.1"/>
</dbReference>
<dbReference type="PDB" id="6RLB">
    <property type="method" value="EM"/>
    <property type="resolution" value="4.50 A"/>
    <property type="chains" value="D=1-536"/>
</dbReference>
<dbReference type="PDB" id="6SC2">
    <property type="method" value="EM"/>
    <property type="resolution" value="3.90 A"/>
    <property type="chains" value="D=1-536"/>
</dbReference>
<dbReference type="PDB" id="8RGG">
    <property type="method" value="EM"/>
    <property type="resolution" value="4.00 A"/>
    <property type="chains" value="D=1-536"/>
</dbReference>
<dbReference type="PDB" id="8RGH">
    <property type="method" value="EM"/>
    <property type="resolution" value="3.90 A"/>
    <property type="chains" value="D=1-536"/>
</dbReference>
<dbReference type="PDBsum" id="6RLB"/>
<dbReference type="PDBsum" id="6SC2"/>
<dbReference type="PDBsum" id="8RGG"/>
<dbReference type="PDBsum" id="8RGH"/>
<dbReference type="EMDB" id="EMD-19132"/>
<dbReference type="EMDB" id="EMD-19133"/>
<dbReference type="EMDB" id="EMD-4918"/>
<dbReference type="SMR" id="Q96EX3"/>
<dbReference type="BioGRID" id="124640">
    <property type="interactions" value="56"/>
</dbReference>
<dbReference type="CORUM" id="Q96EX3"/>
<dbReference type="FunCoup" id="Q96EX3">
    <property type="interactions" value="502"/>
</dbReference>
<dbReference type="IntAct" id="Q96EX3">
    <property type="interactions" value="42"/>
</dbReference>
<dbReference type="MINT" id="Q96EX3"/>
<dbReference type="STRING" id="9606.ENSP00000361800"/>
<dbReference type="iPTMnet" id="Q96EX3"/>
<dbReference type="PhosphoSitePlus" id="Q96EX3"/>
<dbReference type="BioMuta" id="WDR34"/>
<dbReference type="DMDM" id="88985038"/>
<dbReference type="jPOST" id="Q96EX3"/>
<dbReference type="MassIVE" id="Q96EX3"/>
<dbReference type="PaxDb" id="9606-ENSP00000361800"/>
<dbReference type="PeptideAtlas" id="Q96EX3"/>
<dbReference type="ProteomicsDB" id="76465"/>
<dbReference type="Pumba" id="Q96EX3"/>
<dbReference type="Antibodypedia" id="31223">
    <property type="antibodies" value="115 antibodies from 17 providers"/>
</dbReference>
<dbReference type="DNASU" id="89891"/>
<dbReference type="Ensembl" id="ENST00000372715.7">
    <property type="protein sequence ID" value="ENSP00000361800.2"/>
    <property type="gene ID" value="ENSG00000119333.12"/>
</dbReference>
<dbReference type="GeneID" id="89891"/>
<dbReference type="KEGG" id="hsa:89891"/>
<dbReference type="MANE-Select" id="ENST00000372715.7">
    <property type="protein sequence ID" value="ENSP00000361800.2"/>
    <property type="RefSeq nucleotide sequence ID" value="NM_052844.4"/>
    <property type="RefSeq protein sequence ID" value="NP_443076.2"/>
</dbReference>
<dbReference type="UCSC" id="uc004bvq.2">
    <property type="organism name" value="human"/>
</dbReference>
<dbReference type="AGR" id="HGNC:28296"/>
<dbReference type="CTD" id="89891"/>
<dbReference type="DisGeNET" id="89891"/>
<dbReference type="GeneCards" id="DYNC2I2"/>
<dbReference type="HGNC" id="HGNC:28296">
    <property type="gene designation" value="DYNC2I2"/>
</dbReference>
<dbReference type="HPA" id="ENSG00000119333">
    <property type="expression patterns" value="Low tissue specificity"/>
</dbReference>
<dbReference type="MalaCards" id="DYNC2I2"/>
<dbReference type="MIM" id="613363">
    <property type="type" value="gene"/>
</dbReference>
<dbReference type="MIM" id="615633">
    <property type="type" value="phenotype"/>
</dbReference>
<dbReference type="neXtProt" id="NX_Q96EX3"/>
<dbReference type="OpenTargets" id="ENSG00000119333"/>
<dbReference type="Orphanet" id="474">
    <property type="disease" value="Jeune syndrome"/>
</dbReference>
<dbReference type="Orphanet" id="93271">
    <property type="disease" value="Short rib-polydactyly syndrome, Verma-Naumoff type"/>
</dbReference>
<dbReference type="VEuPathDB" id="HostDB:ENSG00000119333"/>
<dbReference type="eggNOG" id="KOG1587">
    <property type="taxonomic scope" value="Eukaryota"/>
</dbReference>
<dbReference type="GeneTree" id="ENSGT00940000158483"/>
<dbReference type="HOGENOM" id="CLU_031167_1_0_1"/>
<dbReference type="InParanoid" id="Q96EX3"/>
<dbReference type="OMA" id="SYVCAWN"/>
<dbReference type="OrthoDB" id="445052at2759"/>
<dbReference type="PAN-GO" id="Q96EX3">
    <property type="GO annotations" value="5 GO annotations based on evolutionary models"/>
</dbReference>
<dbReference type="PhylomeDB" id="Q96EX3"/>
<dbReference type="TreeFam" id="TF300553"/>
<dbReference type="PathwayCommons" id="Q96EX3"/>
<dbReference type="Reactome" id="R-HSA-5620924">
    <property type="pathway name" value="Intraflagellar transport"/>
</dbReference>
<dbReference type="SignaLink" id="Q96EX3"/>
<dbReference type="BioGRID-ORCS" id="89891">
    <property type="hits" value="12 hits in 1157 CRISPR screens"/>
</dbReference>
<dbReference type="ChiTaRS" id="WDR34">
    <property type="organism name" value="human"/>
</dbReference>
<dbReference type="GenomeRNAi" id="89891"/>
<dbReference type="Pharos" id="Q96EX3">
    <property type="development level" value="Tbio"/>
</dbReference>
<dbReference type="PRO" id="PR:Q96EX3"/>
<dbReference type="Proteomes" id="UP000005640">
    <property type="component" value="Chromosome 9"/>
</dbReference>
<dbReference type="RNAct" id="Q96EX3">
    <property type="molecule type" value="protein"/>
</dbReference>
<dbReference type="Bgee" id="ENSG00000119333">
    <property type="expression patterns" value="Expressed in right uterine tube and 166 other cell types or tissues"/>
</dbReference>
<dbReference type="ExpressionAtlas" id="Q96EX3">
    <property type="expression patterns" value="baseline and differential"/>
</dbReference>
<dbReference type="GO" id="GO:0005930">
    <property type="term" value="C:axoneme"/>
    <property type="evidence" value="ECO:0000250"/>
    <property type="project" value="UniProtKB"/>
</dbReference>
<dbReference type="GO" id="GO:0005814">
    <property type="term" value="C:centriole"/>
    <property type="evidence" value="ECO:0000250"/>
    <property type="project" value="UniProtKB"/>
</dbReference>
<dbReference type="GO" id="GO:0005813">
    <property type="term" value="C:centrosome"/>
    <property type="evidence" value="ECO:0000314"/>
    <property type="project" value="UniProtKB"/>
</dbReference>
<dbReference type="GO" id="GO:0036064">
    <property type="term" value="C:ciliary basal body"/>
    <property type="evidence" value="ECO:0000314"/>
    <property type="project" value="UniProtKB"/>
</dbReference>
<dbReference type="GO" id="GO:0097014">
    <property type="term" value="C:ciliary plasm"/>
    <property type="evidence" value="ECO:0000318"/>
    <property type="project" value="GO_Central"/>
</dbReference>
<dbReference type="GO" id="GO:0097542">
    <property type="term" value="C:ciliary tip"/>
    <property type="evidence" value="ECO:0000304"/>
    <property type="project" value="Reactome"/>
</dbReference>
<dbReference type="GO" id="GO:0005929">
    <property type="term" value="C:cilium"/>
    <property type="evidence" value="ECO:0000314"/>
    <property type="project" value="UniProtKB"/>
</dbReference>
<dbReference type="GO" id="GO:0005737">
    <property type="term" value="C:cytoplasm"/>
    <property type="evidence" value="ECO:0000314"/>
    <property type="project" value="UniProtKB"/>
</dbReference>
<dbReference type="GO" id="GO:0005868">
    <property type="term" value="C:cytoplasmic dynein complex"/>
    <property type="evidence" value="ECO:0000314"/>
    <property type="project" value="UniProtKB"/>
</dbReference>
<dbReference type="GO" id="GO:0005829">
    <property type="term" value="C:cytosol"/>
    <property type="evidence" value="ECO:0000314"/>
    <property type="project" value="HPA"/>
</dbReference>
<dbReference type="GO" id="GO:0030175">
    <property type="term" value="C:filopodium"/>
    <property type="evidence" value="ECO:0007669"/>
    <property type="project" value="UniProtKB-SubCell"/>
</dbReference>
<dbReference type="GO" id="GO:0016604">
    <property type="term" value="C:nuclear body"/>
    <property type="evidence" value="ECO:0000314"/>
    <property type="project" value="HPA"/>
</dbReference>
<dbReference type="GO" id="GO:0031965">
    <property type="term" value="C:nuclear membrane"/>
    <property type="evidence" value="ECO:0000314"/>
    <property type="project" value="HPA"/>
</dbReference>
<dbReference type="GO" id="GO:0005730">
    <property type="term" value="C:nucleolus"/>
    <property type="evidence" value="ECO:0000314"/>
    <property type="project" value="HPA"/>
</dbReference>
<dbReference type="GO" id="GO:0005654">
    <property type="term" value="C:nucleoplasm"/>
    <property type="evidence" value="ECO:0000314"/>
    <property type="project" value="HPA"/>
</dbReference>
<dbReference type="GO" id="GO:0045504">
    <property type="term" value="F:dynein heavy chain binding"/>
    <property type="evidence" value="ECO:0000318"/>
    <property type="project" value="GO_Central"/>
</dbReference>
<dbReference type="GO" id="GO:0045503">
    <property type="term" value="F:dynein light chain binding"/>
    <property type="evidence" value="ECO:0000353"/>
    <property type="project" value="GO_Central"/>
</dbReference>
<dbReference type="GO" id="GO:0060271">
    <property type="term" value="P:cilium assembly"/>
    <property type="evidence" value="ECO:0000316"/>
    <property type="project" value="GO_Central"/>
</dbReference>
<dbReference type="GO" id="GO:0035721">
    <property type="term" value="P:intraciliary retrograde transport"/>
    <property type="evidence" value="ECO:0000315"/>
    <property type="project" value="UniProtKB"/>
</dbReference>
<dbReference type="GO" id="GO:0042073">
    <property type="term" value="P:intraciliary transport"/>
    <property type="evidence" value="ECO:0000318"/>
    <property type="project" value="GO_Central"/>
</dbReference>
<dbReference type="FunFam" id="2.130.10.10:FF:000283">
    <property type="entry name" value="WD repeat domain 34"/>
    <property type="match status" value="1"/>
</dbReference>
<dbReference type="FunFam" id="2.130.10.10:FF:000507">
    <property type="entry name" value="WD repeat domain 34"/>
    <property type="match status" value="1"/>
</dbReference>
<dbReference type="Gene3D" id="2.130.10.10">
    <property type="entry name" value="YVTN repeat-like/Quinoprotein amine dehydrogenase"/>
    <property type="match status" value="2"/>
</dbReference>
<dbReference type="InterPro" id="IPR050687">
    <property type="entry name" value="Dynein_IC"/>
</dbReference>
<dbReference type="InterPro" id="IPR015943">
    <property type="entry name" value="WD40/YVTN_repeat-like_dom_sf"/>
</dbReference>
<dbReference type="InterPro" id="IPR036322">
    <property type="entry name" value="WD40_repeat_dom_sf"/>
</dbReference>
<dbReference type="InterPro" id="IPR001680">
    <property type="entry name" value="WD40_rpt"/>
</dbReference>
<dbReference type="PANTHER" id="PTHR12442:SF26">
    <property type="entry name" value="CYTOPLASMIC DYNEIN 2 INTERMEDIATE CHAIN 2"/>
    <property type="match status" value="1"/>
</dbReference>
<dbReference type="PANTHER" id="PTHR12442">
    <property type="entry name" value="DYNEIN INTERMEDIATE CHAIN"/>
    <property type="match status" value="1"/>
</dbReference>
<dbReference type="Pfam" id="PF00400">
    <property type="entry name" value="WD40"/>
    <property type="match status" value="2"/>
</dbReference>
<dbReference type="SMART" id="SM00320">
    <property type="entry name" value="WD40"/>
    <property type="match status" value="5"/>
</dbReference>
<dbReference type="SUPFAM" id="SSF50978">
    <property type="entry name" value="WD40 repeat-like"/>
    <property type="match status" value="1"/>
</dbReference>
<dbReference type="PROSITE" id="PS50294">
    <property type="entry name" value="WD_REPEATS_REGION"/>
    <property type="match status" value="1"/>
</dbReference>
<protein>
    <recommendedName>
        <fullName>Cytoplasmic dynein 2 intermediate chain 2</fullName>
    </recommendedName>
    <alternativeName>
        <fullName>Dynein 2 intermediate chain 2</fullName>
    </alternativeName>
    <alternativeName>
        <fullName>WD repeat-containing protein 34</fullName>
    </alternativeName>
</protein>
<organism>
    <name type="scientific">Homo sapiens</name>
    <name type="common">Human</name>
    <dbReference type="NCBI Taxonomy" id="9606"/>
    <lineage>
        <taxon>Eukaryota</taxon>
        <taxon>Metazoa</taxon>
        <taxon>Chordata</taxon>
        <taxon>Craniata</taxon>
        <taxon>Vertebrata</taxon>
        <taxon>Euteleostomi</taxon>
        <taxon>Mammalia</taxon>
        <taxon>Eutheria</taxon>
        <taxon>Euarchontoglires</taxon>
        <taxon>Primates</taxon>
        <taxon>Haplorrhini</taxon>
        <taxon>Catarrhini</taxon>
        <taxon>Hominidae</taxon>
        <taxon>Homo</taxon>
    </lineage>
</organism>